<proteinExistence type="inferred from homology"/>
<sequence length="296" mass="34300">MNLQTMIRTLQDYWSEQGCIMLQSYDVEKGAGTMSPYTFLKAIGPEPWKAGYIEPSRRPADGRYGENPNRLFQHHQFQVVMKPSPDNIQELYLGSLEKLGINPLEHDIRFVEDNWENPSLGCAGLGWEVWLDGMEITQFTYFQQVGGLECFPVTSEITYGVERLASYIQDKENVFDLEWTEGISYRDIFFQAEFENSTYAFETSNTDMLLTLFDTYEREAARQMQEGLVFPAYDYVLKCSHTFNLLDARGVVSVTERAQYIGRIRNLARRVAKTFYESREKLGFPLVKEEGGKRHE</sequence>
<gene>
    <name evidence="1" type="primary">glyQ</name>
    <name type="ordered locus">lwe1474</name>
</gene>
<feature type="chain" id="PRO_1000047442" description="Glycine--tRNA ligase alpha subunit">
    <location>
        <begin position="1"/>
        <end position="296"/>
    </location>
</feature>
<dbReference type="EC" id="6.1.1.14" evidence="1"/>
<dbReference type="EMBL" id="AM263198">
    <property type="protein sequence ID" value="CAK20892.1"/>
    <property type="molecule type" value="Genomic_DNA"/>
</dbReference>
<dbReference type="RefSeq" id="WP_011702267.1">
    <property type="nucleotide sequence ID" value="NC_008555.1"/>
</dbReference>
<dbReference type="SMR" id="A0AIR0"/>
<dbReference type="STRING" id="386043.lwe1474"/>
<dbReference type="GeneID" id="61189350"/>
<dbReference type="KEGG" id="lwe:lwe1474"/>
<dbReference type="eggNOG" id="COG0752">
    <property type="taxonomic scope" value="Bacteria"/>
</dbReference>
<dbReference type="HOGENOM" id="CLU_057066_1_0_9"/>
<dbReference type="OrthoDB" id="9802183at2"/>
<dbReference type="Proteomes" id="UP000000779">
    <property type="component" value="Chromosome"/>
</dbReference>
<dbReference type="GO" id="GO:0005829">
    <property type="term" value="C:cytosol"/>
    <property type="evidence" value="ECO:0007669"/>
    <property type="project" value="TreeGrafter"/>
</dbReference>
<dbReference type="GO" id="GO:0005524">
    <property type="term" value="F:ATP binding"/>
    <property type="evidence" value="ECO:0007669"/>
    <property type="project" value="UniProtKB-UniRule"/>
</dbReference>
<dbReference type="GO" id="GO:0140096">
    <property type="term" value="F:catalytic activity, acting on a protein"/>
    <property type="evidence" value="ECO:0007669"/>
    <property type="project" value="UniProtKB-ARBA"/>
</dbReference>
<dbReference type="GO" id="GO:0004820">
    <property type="term" value="F:glycine-tRNA ligase activity"/>
    <property type="evidence" value="ECO:0007669"/>
    <property type="project" value="UniProtKB-UniRule"/>
</dbReference>
<dbReference type="GO" id="GO:0016740">
    <property type="term" value="F:transferase activity"/>
    <property type="evidence" value="ECO:0007669"/>
    <property type="project" value="UniProtKB-ARBA"/>
</dbReference>
<dbReference type="GO" id="GO:0006426">
    <property type="term" value="P:glycyl-tRNA aminoacylation"/>
    <property type="evidence" value="ECO:0007669"/>
    <property type="project" value="UniProtKB-UniRule"/>
</dbReference>
<dbReference type="CDD" id="cd00733">
    <property type="entry name" value="GlyRS_alpha_core"/>
    <property type="match status" value="1"/>
</dbReference>
<dbReference type="FunFam" id="3.30.930.10:FF:000006">
    <property type="entry name" value="Glycine--tRNA ligase alpha subunit"/>
    <property type="match status" value="1"/>
</dbReference>
<dbReference type="Gene3D" id="3.30.930.10">
    <property type="entry name" value="Bira Bifunctional Protein, Domain 2"/>
    <property type="match status" value="1"/>
</dbReference>
<dbReference type="Gene3D" id="1.20.58.180">
    <property type="entry name" value="Class II aaRS and biotin synthetases, domain 2"/>
    <property type="match status" value="1"/>
</dbReference>
<dbReference type="HAMAP" id="MF_00254">
    <property type="entry name" value="Gly_tRNA_synth_alpha"/>
    <property type="match status" value="1"/>
</dbReference>
<dbReference type="InterPro" id="IPR045864">
    <property type="entry name" value="aa-tRNA-synth_II/BPL/LPL"/>
</dbReference>
<dbReference type="InterPro" id="IPR006194">
    <property type="entry name" value="Gly-tRNA-synth_heterodimer"/>
</dbReference>
<dbReference type="InterPro" id="IPR002310">
    <property type="entry name" value="Gly-tRNA_ligase_asu"/>
</dbReference>
<dbReference type="NCBIfam" id="TIGR00388">
    <property type="entry name" value="glyQ"/>
    <property type="match status" value="1"/>
</dbReference>
<dbReference type="NCBIfam" id="NF006827">
    <property type="entry name" value="PRK09348.1"/>
    <property type="match status" value="1"/>
</dbReference>
<dbReference type="PANTHER" id="PTHR30075:SF2">
    <property type="entry name" value="GLYCINE--TRNA LIGASE, CHLOROPLASTIC_MITOCHONDRIAL 2"/>
    <property type="match status" value="1"/>
</dbReference>
<dbReference type="PANTHER" id="PTHR30075">
    <property type="entry name" value="GLYCYL-TRNA SYNTHETASE"/>
    <property type="match status" value="1"/>
</dbReference>
<dbReference type="Pfam" id="PF02091">
    <property type="entry name" value="tRNA-synt_2e"/>
    <property type="match status" value="1"/>
</dbReference>
<dbReference type="PRINTS" id="PR01044">
    <property type="entry name" value="TRNASYNTHGA"/>
</dbReference>
<dbReference type="SUPFAM" id="SSF55681">
    <property type="entry name" value="Class II aaRS and biotin synthetases"/>
    <property type="match status" value="1"/>
</dbReference>
<dbReference type="PROSITE" id="PS50861">
    <property type="entry name" value="AA_TRNA_LIGASE_II_GLYAB"/>
    <property type="match status" value="1"/>
</dbReference>
<name>SYGA_LISW6</name>
<keyword id="KW-0030">Aminoacyl-tRNA synthetase</keyword>
<keyword id="KW-0067">ATP-binding</keyword>
<keyword id="KW-0963">Cytoplasm</keyword>
<keyword id="KW-0436">Ligase</keyword>
<keyword id="KW-0547">Nucleotide-binding</keyword>
<keyword id="KW-0648">Protein biosynthesis</keyword>
<organism>
    <name type="scientific">Listeria welshimeri serovar 6b (strain ATCC 35897 / DSM 20650 / CCUG 15529 / CIP 8149 / NCTC 11857 / SLCC 5334 / V8)</name>
    <dbReference type="NCBI Taxonomy" id="386043"/>
    <lineage>
        <taxon>Bacteria</taxon>
        <taxon>Bacillati</taxon>
        <taxon>Bacillota</taxon>
        <taxon>Bacilli</taxon>
        <taxon>Bacillales</taxon>
        <taxon>Listeriaceae</taxon>
        <taxon>Listeria</taxon>
    </lineage>
</organism>
<accession>A0AIR0</accession>
<evidence type="ECO:0000255" key="1">
    <source>
        <dbReference type="HAMAP-Rule" id="MF_00254"/>
    </source>
</evidence>
<reference key="1">
    <citation type="journal article" date="2006" name="J. Bacteriol.">
        <title>Whole-genome sequence of Listeria welshimeri reveals common steps in genome reduction with Listeria innocua as compared to Listeria monocytogenes.</title>
        <authorList>
            <person name="Hain T."/>
            <person name="Steinweg C."/>
            <person name="Kuenne C.T."/>
            <person name="Billion A."/>
            <person name="Ghai R."/>
            <person name="Chatterjee S.S."/>
            <person name="Domann E."/>
            <person name="Kaerst U."/>
            <person name="Goesmann A."/>
            <person name="Bekel T."/>
            <person name="Bartels D."/>
            <person name="Kaiser O."/>
            <person name="Meyer F."/>
            <person name="Puehler A."/>
            <person name="Weisshaar B."/>
            <person name="Wehland J."/>
            <person name="Liang C."/>
            <person name="Dandekar T."/>
            <person name="Lampidis R."/>
            <person name="Kreft J."/>
            <person name="Goebel W."/>
            <person name="Chakraborty T."/>
        </authorList>
    </citation>
    <scope>NUCLEOTIDE SEQUENCE [LARGE SCALE GENOMIC DNA]</scope>
    <source>
        <strain>ATCC 35897 / DSM 20650 / CCUG 15529 / CIP 8149 / NCTC 11857 / SLCC 5334 / V8</strain>
    </source>
</reference>
<comment type="catalytic activity">
    <reaction evidence="1">
        <text>tRNA(Gly) + glycine + ATP = glycyl-tRNA(Gly) + AMP + diphosphate</text>
        <dbReference type="Rhea" id="RHEA:16013"/>
        <dbReference type="Rhea" id="RHEA-COMP:9664"/>
        <dbReference type="Rhea" id="RHEA-COMP:9683"/>
        <dbReference type="ChEBI" id="CHEBI:30616"/>
        <dbReference type="ChEBI" id="CHEBI:33019"/>
        <dbReference type="ChEBI" id="CHEBI:57305"/>
        <dbReference type="ChEBI" id="CHEBI:78442"/>
        <dbReference type="ChEBI" id="CHEBI:78522"/>
        <dbReference type="ChEBI" id="CHEBI:456215"/>
        <dbReference type="EC" id="6.1.1.14"/>
    </reaction>
</comment>
<comment type="subunit">
    <text evidence="1">Tetramer of two alpha and two beta subunits.</text>
</comment>
<comment type="subcellular location">
    <subcellularLocation>
        <location evidence="1">Cytoplasm</location>
    </subcellularLocation>
</comment>
<comment type="similarity">
    <text evidence="1">Belongs to the class-II aminoacyl-tRNA synthetase family.</text>
</comment>
<protein>
    <recommendedName>
        <fullName evidence="1">Glycine--tRNA ligase alpha subunit</fullName>
        <ecNumber evidence="1">6.1.1.14</ecNumber>
    </recommendedName>
    <alternativeName>
        <fullName evidence="1">Glycyl-tRNA synthetase alpha subunit</fullName>
        <shortName evidence="1">GlyRS</shortName>
    </alternativeName>
</protein>